<name>Y2809_CLOBM</name>
<feature type="chain" id="PRO_1000130744" description="Nucleotide-binding protein CLK_2809">
    <location>
        <begin position="1"/>
        <end position="294"/>
    </location>
</feature>
<feature type="binding site" evidence="1">
    <location>
        <begin position="8"/>
        <end position="15"/>
    </location>
    <ligand>
        <name>ATP</name>
        <dbReference type="ChEBI" id="CHEBI:30616"/>
    </ligand>
</feature>
<feature type="binding site" evidence="1">
    <location>
        <begin position="59"/>
        <end position="62"/>
    </location>
    <ligand>
        <name>GTP</name>
        <dbReference type="ChEBI" id="CHEBI:37565"/>
    </ligand>
</feature>
<proteinExistence type="inferred from homology"/>
<reference key="1">
    <citation type="journal article" date="2007" name="PLoS ONE">
        <title>Analysis of the neurotoxin complex genes in Clostridium botulinum A1-A4 and B1 strains: BoNT/A3, /Ba4 and /B1 clusters are located within plasmids.</title>
        <authorList>
            <person name="Smith T.J."/>
            <person name="Hill K.K."/>
            <person name="Foley B.T."/>
            <person name="Detter J.C."/>
            <person name="Munk A.C."/>
            <person name="Bruce D.C."/>
            <person name="Doggett N.A."/>
            <person name="Smith L.A."/>
            <person name="Marks J.D."/>
            <person name="Xie G."/>
            <person name="Brettin T.S."/>
        </authorList>
    </citation>
    <scope>NUCLEOTIDE SEQUENCE [LARGE SCALE GENOMIC DNA]</scope>
    <source>
        <strain>Loch Maree / Type A3</strain>
    </source>
</reference>
<protein>
    <recommendedName>
        <fullName evidence="1">Nucleotide-binding protein CLK_2809</fullName>
    </recommendedName>
</protein>
<comment type="function">
    <text evidence="1">Displays ATPase and GTPase activities.</text>
</comment>
<comment type="similarity">
    <text evidence="1">Belongs to the RapZ-like family.</text>
</comment>
<keyword id="KW-0067">ATP-binding</keyword>
<keyword id="KW-0342">GTP-binding</keyword>
<keyword id="KW-0547">Nucleotide-binding</keyword>
<organism>
    <name type="scientific">Clostridium botulinum (strain Loch Maree / Type A3)</name>
    <dbReference type="NCBI Taxonomy" id="498214"/>
    <lineage>
        <taxon>Bacteria</taxon>
        <taxon>Bacillati</taxon>
        <taxon>Bacillota</taxon>
        <taxon>Clostridia</taxon>
        <taxon>Eubacteriales</taxon>
        <taxon>Clostridiaceae</taxon>
        <taxon>Clostridium</taxon>
    </lineage>
</organism>
<gene>
    <name type="ordered locus">CLK_2809</name>
</gene>
<accession>B1L270</accession>
<evidence type="ECO:0000255" key="1">
    <source>
        <dbReference type="HAMAP-Rule" id="MF_00636"/>
    </source>
</evidence>
<dbReference type="EMBL" id="CP000962">
    <property type="protein sequence ID" value="ACA54185.1"/>
    <property type="molecule type" value="Genomic_DNA"/>
</dbReference>
<dbReference type="RefSeq" id="WP_012342319.1">
    <property type="nucleotide sequence ID" value="NC_010520.1"/>
</dbReference>
<dbReference type="SMR" id="B1L270"/>
<dbReference type="KEGG" id="cbl:CLK_2809"/>
<dbReference type="HOGENOM" id="CLU_059558_0_0_9"/>
<dbReference type="GO" id="GO:0005524">
    <property type="term" value="F:ATP binding"/>
    <property type="evidence" value="ECO:0007669"/>
    <property type="project" value="UniProtKB-UniRule"/>
</dbReference>
<dbReference type="GO" id="GO:0005525">
    <property type="term" value="F:GTP binding"/>
    <property type="evidence" value="ECO:0007669"/>
    <property type="project" value="UniProtKB-UniRule"/>
</dbReference>
<dbReference type="Gene3D" id="3.40.50.300">
    <property type="entry name" value="P-loop containing nucleotide triphosphate hydrolases"/>
    <property type="match status" value="1"/>
</dbReference>
<dbReference type="HAMAP" id="MF_00636">
    <property type="entry name" value="RapZ_like"/>
    <property type="match status" value="1"/>
</dbReference>
<dbReference type="InterPro" id="IPR027417">
    <property type="entry name" value="P-loop_NTPase"/>
</dbReference>
<dbReference type="InterPro" id="IPR005337">
    <property type="entry name" value="RapZ-like"/>
</dbReference>
<dbReference type="InterPro" id="IPR053930">
    <property type="entry name" value="RapZ-like_N"/>
</dbReference>
<dbReference type="InterPro" id="IPR053931">
    <property type="entry name" value="RapZ_C"/>
</dbReference>
<dbReference type="NCBIfam" id="NF003828">
    <property type="entry name" value="PRK05416.1"/>
    <property type="match status" value="1"/>
</dbReference>
<dbReference type="PANTHER" id="PTHR30448">
    <property type="entry name" value="RNASE ADAPTER PROTEIN RAPZ"/>
    <property type="match status" value="1"/>
</dbReference>
<dbReference type="PANTHER" id="PTHR30448:SF0">
    <property type="entry name" value="RNASE ADAPTER PROTEIN RAPZ"/>
    <property type="match status" value="1"/>
</dbReference>
<dbReference type="Pfam" id="PF22740">
    <property type="entry name" value="PapZ_C"/>
    <property type="match status" value="1"/>
</dbReference>
<dbReference type="Pfam" id="PF03668">
    <property type="entry name" value="RapZ-like_N"/>
    <property type="match status" value="1"/>
</dbReference>
<dbReference type="PIRSF" id="PIRSF005052">
    <property type="entry name" value="P-loopkin"/>
    <property type="match status" value="1"/>
</dbReference>
<dbReference type="SUPFAM" id="SSF52540">
    <property type="entry name" value="P-loop containing nucleoside triphosphate hydrolases"/>
    <property type="match status" value="1"/>
</dbReference>
<sequence>MRFVIVTGLSGAGKTQAIRSLEDLGFFCVDNLPPTLIPKFAEACYQTEGKIKKIALVIDIRGGKFFDDLFESLKYLKEEGYKYEILFLDASDEVLIKRFKESRRKHPLSPDGRILNGISMERNRLREVKDRADNIINTSELATRELREAINEIYGEQDQIENQLVITVLSFGFKYGIPLDSDLVFDVRFLPNPYYIKELKQYSGKDKKVSDYVMSFDVTNKFVNRLEDMLDFLIPNYFKEGKRQLIISIGCTGGRHRSVAIANAIYEGLKSKGHEVNIDHRDINEDIHKGGKKL</sequence>